<reference key="1">
    <citation type="submission" date="2000-02" db="EMBL/GenBank/DDBJ databases">
        <authorList>
            <person name="Netto M.C.M.G."/>
            <person name="Shirako Y."/>
            <person name="Strauss E.G."/>
            <person name="Carvalho M.G.C."/>
            <person name="Strauss J.H."/>
        </authorList>
    </citation>
    <scope>NUCLEOTIDE SEQUENCE [GENOMIC RNA]</scope>
</reference>
<reference key="2">
    <citation type="journal article" date="2023" name="PLoS Pathog.">
        <title>The E2 glycoprotein holds key residues for Mayaro virus adaptation to the urban Aedes aegypti mosquito.</title>
        <authorList>
            <person name="Cereghino C."/>
            <person name="Roesch F."/>
            <person name="Carrau L."/>
            <person name="Hardy A."/>
            <person name="Ribeiro-Filho H.V."/>
            <person name="Henrion-Lacritick A."/>
            <person name="Koh C."/>
            <person name="Marano J.M."/>
            <person name="Bates T.A."/>
            <person name="Rai P."/>
            <person name="Chuong C."/>
            <person name="Akter S."/>
            <person name="Vallet T."/>
            <person name="Blanc H."/>
            <person name="Elliott T.J."/>
            <person name="Brown A.M."/>
            <person name="Michalak P."/>
            <person name="LeRoith T."/>
            <person name="Bloom J.D."/>
            <person name="Marques R.E."/>
            <person name="Saleh M.C."/>
            <person name="Vignuzzi M."/>
            <person name="Weger-Lucarelli J."/>
        </authorList>
    </citation>
    <scope>MUTAGENESIS OF THR-503</scope>
    <scope>INTERACTION WITH HOST RECEPTOR MXRA8 (SPIKE GLYCOPROTEIN E2)</scope>
</reference>
<reference evidence="18 19" key="3">
    <citation type="journal article" date="2020" name="Cell Host Microbe">
        <title>Human mAbs Broadly Protect against Arthritogenic Alphaviruses by Recognizing Conserved Elements of the Mxra8 Receptor-Binding Site.</title>
        <authorList>
            <person name="Powell L.A."/>
            <person name="Miller A."/>
            <person name="Fox J.M."/>
            <person name="Kose N."/>
            <person name="Klose T."/>
            <person name="Kim A.S."/>
            <person name="Bombardi R."/>
            <person name="Tennekoon R.N."/>
            <person name="Dharshan de Silva A."/>
            <person name="Carnahan R.H."/>
            <person name="Diamond M.S."/>
            <person name="Rossmann M.G."/>
            <person name="Kuhn R.J."/>
            <person name="Crowe J.E. Jr."/>
        </authorList>
    </citation>
    <scope>STRUCTURE BY ELECTRON MICROSCOPY (4.80 ANGSTROMS) OF 325-664 AND 807-1186</scope>
    <scope>RECEPTOR-BINDING REGION</scope>
    <scope>INTERACTION WITH HOST RECEPTOR MXRA8 (SPIKE GLYCOPROTEIN E2)</scope>
    <scope>FUNCTION (SPIKE GLYCOPROTEIN E2)</scope>
    <source>
        <strain>BeH407</strain>
        <strain>TR VL-4675</strain>
    </source>
</reference>
<name>POLS_MAYAB</name>
<sequence length="1242" mass="137057">MDFLPTQVFYGRRWRPRMPPRPWRPRMPTMQRPDQQARQMQQLIAAVSTLALRQNAAAPQRGKKKQPRRKKPKPQPEKPKKQEQKPKQKKAPKRKPGRRERMCMKIEHDCIFEVKHEGKVTGYACLVGDKVMKPAHVPGVIDNADLARLSYKKSSKYDLECAQIPVAMKSDASKYTHEKPEGHYNWHYGAVQYTGGRFTVPTGVGKPGDSGRPIFDNKGPVVAIVLGGANEGTRTALSVVTWNKDMVTKITPEGTVEWAASTVTAMCLLTNISFPCFQPSCAPCCYEKGPEPTLRMLEENVNSEGYYDLLHAAVYCRNSSRSKRSTANHFNAYKLTRPYVAYCADCGMGHSCHSPAMIENIQADATDGTLKIQFASQIGLTKTDTHDHTKIRYAEGHDIAEAARSTLKVHSSSECTVTGTMGHFILAKCPPGERISVSFVDSKNEHRTCRIAYHHEQRLIGRERFTVRPHHGIELPCTTYQLTTAETSEEIDMHMPPDIPDRTILSQQSGNVKITVNGRTVRYSSSCGSQAVGTTTTDKTINSCTVDKCQAYVTSHTKWQFNSPFVPRRMQAERKGKVHIPFPLINTTCRVPLAPEALVRSGKREATLSLHPIHPTLLSYRTFGAERVFDEQWITAQTEVTIPVPVEGVEYQWGNHKPQRFVVALTTEGKAHGWPHEIIEYYYGLHPTTTIVVVIRVSVVVLLSFAASVYMCVVARTKCLTPYALTPGAVVPVTIGVLCCAPKAHAASFAEGMAYLWDNNQSMFWMELTGPLALLILATCCARSLLSCCKGSFLVAMSIGSAVASAYEHTAIIPNQVGFPYKAHVAREGYSPLTLQMQVIETSLEPTLNLEYITCDYKTKVPSPYVKCCGTAECRTQDKPEYKCAVFTGVYPFMWGGAYCFCDSENTQMSEAYVERADVCKHDHAAAYRAHTASLRAKIKVTYGTVNQTVEAYVNGDHAVTIAGTKFIFGPVSTPWTPFDTKILVYKGELYNQDFPRYGAGQPGRFGDIQSRTLDSRDLYANTGLKLARPAAGNIHVPYTQTPSGFKTWQKDRDSPLNAKAPFGCIIQTNPVRAMNCAVGNIPVSMDIADSAFTRLTDAPVISELTCTVSTCTHSSDFGGIAVLSYKVEKSGRCDIHSHSNVAVLQEVSIETEGRSVIHFSTASASPSFVVSVCSSRATCTAKCEPPKDHVVTYPANHNGVTLPDLSSTAMTWAQHLAGGVGLLIALAVLILVIVTCVTLRR</sequence>
<organism>
    <name type="scientific">Mayaro virus (strain Brazil)</name>
    <name type="common">MAYV</name>
    <dbReference type="NCBI Taxonomy" id="374990"/>
    <lineage>
        <taxon>Viruses</taxon>
        <taxon>Riboviria</taxon>
        <taxon>Orthornavirae</taxon>
        <taxon>Kitrinoviricota</taxon>
        <taxon>Alsuviricetes</taxon>
        <taxon>Martellivirales</taxon>
        <taxon>Togaviridae</taxon>
        <taxon>Alphavirus</taxon>
        <taxon>Mayaro virus</taxon>
    </lineage>
</organism>
<accession>Q8QZ72</accession>
<accession>Q80S35</accession>
<protein>
    <recommendedName>
        <fullName>Structural polyprotein</fullName>
    </recommendedName>
    <alternativeName>
        <fullName>p130</fullName>
    </alternativeName>
    <component>
        <recommendedName>
            <fullName>Capsid protein</fullName>
            <ecNumber evidence="2">3.4.21.90</ecNumber>
        </recommendedName>
        <alternativeName>
            <fullName>Coat protein</fullName>
            <shortName>C</shortName>
        </alternativeName>
    </component>
    <component>
        <recommendedName>
            <fullName>Precursor of protein E3/E2</fullName>
        </recommendedName>
        <alternativeName>
            <fullName>p62</fullName>
        </alternativeName>
        <alternativeName>
            <fullName>pE2</fullName>
        </alternativeName>
    </component>
    <component>
        <recommendedName>
            <fullName>Assembly protein E3</fullName>
        </recommendedName>
    </component>
    <component>
        <recommendedName>
            <fullName>Spike glycoprotein E2</fullName>
        </recommendedName>
        <alternativeName>
            <fullName>E2 envelope glycoprotein</fullName>
        </alternativeName>
    </component>
    <component>
        <recommendedName>
            <fullName>6K protein</fullName>
        </recommendedName>
    </component>
    <component>
        <recommendedName>
            <fullName>Spike glycoprotein E1</fullName>
        </recommendedName>
        <alternativeName>
            <fullName>E1 envelope glycoprotein</fullName>
        </alternativeName>
    </component>
</protein>
<proteinExistence type="evidence at protein level"/>
<comment type="function">
    <molecule>Capsid protein</molecule>
    <text evidence="2 3 6">Forms an icosahedral capsid with a T=4 symmetry composed of 240 copies of the capsid protein surrounded by a lipid membrane through which penetrate 80 spikes composed of trimers of E1-E2 heterodimers (By similarity). The capsid protein binds to the viral RNA genome at a site adjacent to a ribosome binding site for viral genome translation following genome release (By similarity). Possesses a protease activity that results in its autocatalytic cleavage from the nascent structural protein (By similarity). Following its self-cleavage, the capsid protein transiently associates with ribosomes, and within several minutes the protein binds to viral RNA and rapidly assembles into icosahedric core particles (By similarity). The resulting nucleocapsid eventually associates with the cytoplasmic domain of the spike glycoprotein E2 at the cell membrane, leading to budding and formation of mature virions (By similarity). In case of infection, new virions attach to target cells and after clathrin-mediated endocytosis their membrane fuses with the host endosomal membrane (By similarity). This leads to the release of the nucleocapsid into the cytoplasm, followed by an uncoating event necessary for the genomic RNA to become accessible (By similarity). The uncoating might be triggered by the interaction of capsid proteins with ribosomes (By similarity). Binding of ribosomes would release the genomic RNA since the same region is genomic RNA-binding and ribosome-binding (By similarity). Specifically inhibits interleukin-1 receptor-associated kinase 1/IRAK1-dependent signaling during viral entry, representing a means by which the alphaviruses may evade innate immune detection and activation prior to viral gene expression (By similarity).</text>
</comment>
<comment type="function">
    <molecule>Assembly protein E3</molecule>
    <text evidence="2">Provides the signal sequence for the translocation of the precursor of protein E3/E2 to the host endoplasmic reticulum. Furin-cleaved E3 remains associated with spike glycoprotein E1 and mediates pH protection of the latter during the transport via the secretory pathway. After virion release from the host cell, the assembly protein E3 is gradually released in the extracellular space.</text>
</comment>
<comment type="function">
    <molecule>Spike glycoprotein E2</molecule>
    <text evidence="2 15">Plays a role in viral attachment to target host cell, by binding to the cell receptor MXRA8 (PubMed:32783883). Synthesized as a p62 precursor which is processed by furin at the cell membrane just before virion budding, giving rise to E2-E1 heterodimer. The p62-E1 heterodimer is stable, whereas E2-E1 is unstable and dissociate at low pH. p62 is processed at the last step, presumably to avoid E1 fusion activation before its final export to cell surface. E2 C-terminus contains a transitory transmembrane that would be disrupted by palmitoylation, resulting in reorientation of the C-terminal tail from lumenal to cytoplasmic side. This step is critical since E2 C-terminus is involved in budding by interacting with capsid proteins. This release of E2 C-terminus in cytoplasm occurs lately in protein export, and precludes premature assembly of particles at the endoplasmic reticulum membrane.</text>
</comment>
<comment type="function">
    <molecule>6K protein</molecule>
    <text evidence="2 3">Acts as a viroporin that participates in virus glycoprotein processing and transport to the plasma membrane, cell permeabilization and budding of viral particles (By similarity). Disrupts the calcium homeostasis of the cell, probably at the endoplasmic reticulum level (By similarity). This leads to cytoplasmic calcium elevation (By similarity). Because of its lipophilic properties, the 6K protein is postulated to influence the selection of lipids that interact with the transmembrane domains of the glycoproteins, which, in turn, affects the deformability of the bilayer required for the extreme curvature that occurs as budding proceeds. Present in low amount in virions, about 3% compared to viral glycoproteins (By similarity).</text>
</comment>
<comment type="function">
    <molecule>Spike glycoprotein E1</molecule>
    <text evidence="3">Class II viral fusion protein. Fusion activity is inactive as long as E1 is bound to E2 in mature virion. After virus attachment to target cell via host MXRA8 and endocytosis, acidification of the endosome induce dissociation of E1/E2 heterodimer and concomitant trimerization of the E1 subunits. This E1 trimer is fusion active, and promotes release of viral nucleocapsid in cytoplasm after endosome and viral membrane fusion. Efficient fusion requires the presence of cholesterol and sphingolipid in the target membrane.</text>
</comment>
<comment type="catalytic activity">
    <reaction evidence="2">
        <text>Autocatalytic release of the core protein from the N-terminus of the togavirus structural polyprotein by hydrolysis of a -Trp-|-Ser- bond.</text>
        <dbReference type="EC" id="3.4.21.90"/>
    </reaction>
</comment>
<comment type="subunit">
    <molecule>Capsid protein</molecule>
    <text evidence="3 10 11">Homodimer (By similarity). Homomultimer (By similarity). Interacts with host karyopherin KPNA4; this interaction allows the nuclear import of the viral capsid protein (By similarity). Interacts with spike glycoprotein E2 (By similarity). Interacts with host IRAK1; the interaction leads to inhibition of IRAK1-dependent signaling (By similarity).</text>
</comment>
<comment type="subunit">
    <molecule>Precursor of protein E3/E2</molecule>
    <text evidence="2 3 5 11">The precursor of protein E3/E2 and E1 form a heterodimer shortly after synthesis (By similarity).</text>
</comment>
<comment type="subunit">
    <molecule>Spike glycoprotein E1</molecule>
    <text evidence="2 3 11">The precursor of protein E3/E2 and E1 form a heterodimer shortly after synthesis (By similarity). Processing of the precursor of protein E3/E2 into E2 and E3 results in a heterodimer of the spike glycoproteins E2 and E1 (By similarity). Spike at virion surface are constituted of a trimer of E2-E1 heterodimers (By similarity). After target cell attachment and endocytosis, E1 change conformation to form homotrimers (By similarity). Interacts with 6K protein (By similarity).</text>
</comment>
<comment type="subunit">
    <molecule>Spike glycoprotein E2</molecule>
    <text evidence="3 15 16">Interacts with spike glycoprotein E1 (By similarity). Processing of the precursor of protein E3/E2 into E2 and E3 results in a heterodimer of the spike glycoproteins E2 and E1 (By similarity). Spike at virion surface are constituted of a trimer of E2-E1 heterodimers (By similarity). Interacts with 6K protein (By similarity). Interacts with host MXRA8; this interaction mediates virus entry (PubMed:32783883, PubMed:37018377).</text>
</comment>
<comment type="subunit">
    <molecule>6K protein</molecule>
    <text evidence="3 8">Oligomer (By similarity). Interacts with spike glycoprotein E1. Interacts with spike glycoprotein E2 (By similarity).</text>
</comment>
<comment type="subcellular location">
    <molecule>Capsid protein</molecule>
    <subcellularLocation>
        <location evidence="3">Virion</location>
    </subcellularLocation>
    <subcellularLocation>
        <location evidence="11">Host cytoplasm</location>
    </subcellularLocation>
    <subcellularLocation>
        <location evidence="3">Host cell membrane</location>
    </subcellularLocation>
    <subcellularLocation>
        <location evidence="11">Host nucleus</location>
    </subcellularLocation>
    <text evidence="11">Shuttles between the cytoplasm and the nucleus.</text>
</comment>
<comment type="subcellular location">
    <molecule>Spike glycoprotein E2</molecule>
    <subcellularLocation>
        <location evidence="11">Virion membrane</location>
        <topology evidence="12">Single-pass type I membrane protein</topology>
    </subcellularLocation>
    <subcellularLocation>
        <location evidence="3">Host cell membrane</location>
        <topology evidence="11">Single-pass type I membrane protein</topology>
    </subcellularLocation>
</comment>
<comment type="subcellular location">
    <molecule>6K protein</molecule>
    <subcellularLocation>
        <location evidence="3">Host cell membrane</location>
        <topology evidence="12">Multi-pass membrane protein</topology>
    </subcellularLocation>
    <subcellularLocation>
        <location evidence="3">Virion membrane</location>
        <topology evidence="12">Multi-pass membrane protein</topology>
    </subcellularLocation>
    <subcellularLocation>
        <location evidence="3">Host Golgi apparatus</location>
    </subcellularLocation>
    <subcellularLocation>
        <location>Host Golgi apparatus</location>
        <location>Host trans-Golgi network</location>
    </subcellularLocation>
    <subcellularLocation>
        <location evidence="3">Host endoplasmic reticulum</location>
    </subcellularLocation>
</comment>
<comment type="subcellular location">
    <molecule>Spike glycoprotein E1</molecule>
    <subcellularLocation>
        <location evidence="11">Virion membrane</location>
        <topology evidence="12">Single-pass type I membrane protein</topology>
    </subcellularLocation>
    <subcellularLocation>
        <location evidence="3 11">Host cell membrane</location>
        <topology evidence="12">Single-pass type I membrane protein</topology>
    </subcellularLocation>
</comment>
<comment type="domain">
    <molecule>Capsid protein</molecule>
    <text evidence="3 4">The very N-terminus also plays a role in the particle assembly process (By similarity). The N-terminus also contains a nuclear localization signal and a supra nuclear export signal (supraNES), which is an unusually strong NES that mediates host CRM1 binding in the absence of RanGTP and thus can bind CRM1, not only in the nucleus, but also in the cytoplasm (By similarity). The C-terminus functions as a protease during translation to cleave itself from the translating structural polyprotein (By similarity).</text>
</comment>
<comment type="domain">
    <text evidence="2">Structural polyprotein: As soon as the capsid protein has been autocleaved, an internal uncleaved signal peptide directs the remaining polyprotein to the endoplasmic reticulum.</text>
</comment>
<comment type="PTM">
    <text evidence="2">Structural polyprotein: Specific enzymatic cleavages in vivo yield mature proteins. Capsid protein is auto-cleaved during polyprotein translation, unmasking a signal peptide at the N-terminus of the precursor of E3/E2 (By similarity). The remaining polyprotein is then targeted to the host endoplasmic reticulum, where host signal peptidase cleaves it into pE2, 6K and E1 proteins. pE2 is further processed to mature E3 and E2 by host furin in trans-Golgi vesicle (By similarity).</text>
</comment>
<comment type="PTM">
    <molecule>Spike glycoprotein E2</molecule>
    <text evidence="2">Palmitoylated via thioester bonds. These palmitoylations may induce disruption of the C-terminus transmembrane. This would result in the reorientation of E2 C-terminus from lumenal to cytoplasmic side.</text>
</comment>
<comment type="PTM">
    <molecule>Spike glycoprotein E1</molecule>
    <text evidence="2">N-glycosylated.</text>
</comment>
<comment type="PTM">
    <molecule>Spike glycoprotein E2</molecule>
    <text evidence="2">N-glycosylated.</text>
</comment>
<comment type="PTM">
    <molecule>Assembly protein E3</molecule>
    <text evidence="2">N-glycosylated.</text>
</comment>
<comment type="PTM">
    <molecule>6K protein</molecule>
    <text evidence="2">Palmitoylated via thioester bonds.</text>
</comment>
<comment type="miscellaneous">
    <text evidence="17">Belongs to the Old World alphaviruses that usually cause fever, maculopapular rash, arthralgia and myalgia.</text>
</comment>
<comment type="miscellaneous">
    <text evidence="10">Structural polyprotein: Translated from a subgenomic RNA synthesized during togavirus replication.</text>
</comment>
<evidence type="ECO:0000250" key="1"/>
<evidence type="ECO:0000250" key="2">
    <source>
        <dbReference type="UniProtKB" id="P03315"/>
    </source>
</evidence>
<evidence type="ECO:0000250" key="3">
    <source>
        <dbReference type="UniProtKB" id="P03316"/>
    </source>
</evidence>
<evidence type="ECO:0000250" key="4">
    <source>
        <dbReference type="UniProtKB" id="P09592"/>
    </source>
</evidence>
<evidence type="ECO:0000250" key="5">
    <source>
        <dbReference type="UniProtKB" id="P0DOK1"/>
    </source>
</evidence>
<evidence type="ECO:0000250" key="6">
    <source>
        <dbReference type="UniProtKB" id="P27284"/>
    </source>
</evidence>
<evidence type="ECO:0000250" key="7">
    <source>
        <dbReference type="UniProtKB" id="P89946"/>
    </source>
</evidence>
<evidence type="ECO:0000250" key="8">
    <source>
        <dbReference type="UniProtKB" id="Q5XXP3"/>
    </source>
</evidence>
<evidence type="ECO:0000250" key="9">
    <source>
        <dbReference type="UniProtKB" id="Q5Y388"/>
    </source>
</evidence>
<evidence type="ECO:0000250" key="10">
    <source>
        <dbReference type="UniProtKB" id="Q86925"/>
    </source>
</evidence>
<evidence type="ECO:0000250" key="11">
    <source>
        <dbReference type="UniProtKB" id="Q8JUX5"/>
    </source>
</evidence>
<evidence type="ECO:0000255" key="12"/>
<evidence type="ECO:0000255" key="13">
    <source>
        <dbReference type="PROSITE-ProRule" id="PRU01027"/>
    </source>
</evidence>
<evidence type="ECO:0000256" key="14">
    <source>
        <dbReference type="SAM" id="MobiDB-lite"/>
    </source>
</evidence>
<evidence type="ECO:0000269" key="15">
    <source>
    </source>
</evidence>
<evidence type="ECO:0000269" key="16">
    <source>
    </source>
</evidence>
<evidence type="ECO:0000305" key="17"/>
<evidence type="ECO:0007744" key="18">
    <source>
        <dbReference type="PDB" id="6W1C"/>
    </source>
</evidence>
<evidence type="ECO:0007744" key="19">
    <source>
        <dbReference type="PDB" id="6W2U"/>
    </source>
</evidence>
<feature type="chain" id="PRO_0000238742" description="Capsid protein" evidence="1">
    <location>
        <begin position="1"/>
        <end position="258"/>
    </location>
</feature>
<feature type="chain" id="PRO_0000238743" description="Precursor of protein E3/E2" evidence="1">
    <location>
        <begin position="259"/>
        <end position="746"/>
    </location>
</feature>
<feature type="chain" id="PRO_0000238744" description="Assembly protein E3" evidence="1">
    <location>
        <begin position="259"/>
        <end position="324"/>
    </location>
</feature>
<feature type="chain" id="PRO_0000238745" description="Spike glycoprotein E2" evidence="1">
    <location>
        <begin position="325"/>
        <end position="746"/>
    </location>
</feature>
<feature type="chain" id="PRO_0000238746" description="6K protein" evidence="1">
    <location>
        <begin position="747"/>
        <end position="806"/>
    </location>
</feature>
<feature type="chain" id="PRO_0000238747" description="Spike glycoprotein E1" evidence="1">
    <location>
        <begin position="807"/>
        <end position="1242"/>
    </location>
</feature>
<feature type="topological domain" description="Extracellular" evidence="12">
    <location>
        <begin position="325"/>
        <end position="690"/>
    </location>
</feature>
<feature type="transmembrane region" description="Helical" evidence="12">
    <location>
        <begin position="691"/>
        <end position="711"/>
    </location>
</feature>
<feature type="topological domain" description="Cytoplasmic" evidence="12">
    <location>
        <begin position="712"/>
        <end position="746"/>
    </location>
</feature>
<feature type="topological domain" description="Extracellular" evidence="12">
    <location>
        <begin position="747"/>
        <end position="761"/>
    </location>
</feature>
<feature type="transmembrane region" description="Helical" evidence="12">
    <location>
        <begin position="762"/>
        <end position="782"/>
    </location>
</feature>
<feature type="topological domain" description="Cytoplasmic" evidence="12">
    <location>
        <begin position="783"/>
        <end position="785"/>
    </location>
</feature>
<feature type="transmembrane region" description="Helical" evidence="12">
    <location>
        <begin position="786"/>
        <end position="806"/>
    </location>
</feature>
<feature type="topological domain" description="Extracellular" evidence="12">
    <location>
        <begin position="807"/>
        <end position="1217"/>
    </location>
</feature>
<feature type="transmembrane region" description="Helical" evidence="12">
    <location>
        <begin position="1218"/>
        <end position="1238"/>
    </location>
</feature>
<feature type="topological domain" description="Cytoplasmic" evidence="12">
    <location>
        <begin position="1239"/>
        <end position="1242"/>
    </location>
</feature>
<feature type="domain" description="Peptidase S3" evidence="13">
    <location>
        <begin position="110"/>
        <end position="258"/>
    </location>
</feature>
<feature type="region of interest" description="Disordered" evidence="14">
    <location>
        <begin position="14"/>
        <end position="101"/>
    </location>
</feature>
<feature type="region of interest" description="Host transcription inhibition" evidence="4">
    <location>
        <begin position="35"/>
        <end position="66"/>
    </location>
</feature>
<feature type="region of interest" description="Binding to the viral RNA" evidence="6">
    <location>
        <begin position="82"/>
        <end position="111"/>
    </location>
</feature>
<feature type="region of interest" description="Ribosome-binding" evidence="6">
    <location>
        <begin position="96"/>
        <end position="110"/>
    </location>
</feature>
<feature type="region of interest" description="Interaction with spike glycoprotein E2" evidence="3">
    <location>
        <begin position="152"/>
        <end position="157"/>
    </location>
</feature>
<feature type="region of interest" description="Dimerization of the capsid protein" evidence="5">
    <location>
        <begin position="180"/>
        <end position="190"/>
    </location>
</feature>
<feature type="region of interest" description="Dimerization of the capsid protein" evidence="5">
    <location>
        <begin position="216"/>
        <end position="220"/>
    </location>
</feature>
<feature type="region of interest" description="Functions as an uncleaved signal peptide for the precursor of protein E3/E2" evidence="2">
    <location>
        <begin position="259"/>
        <end position="272"/>
    </location>
</feature>
<feature type="region of interest" description="Interaction with host Mxra8 receptor" evidence="15">
    <location>
        <begin position="350"/>
        <end position="353"/>
    </location>
</feature>
<feature type="region of interest" description="Interaction with host Mxra8 receptor" evidence="15">
    <location>
        <begin position="386"/>
        <end position="388"/>
    </location>
</feature>
<feature type="region of interest" description="Interaction with host Mxra8 receptor" evidence="15">
    <location>
        <begin position="508"/>
        <end position="511"/>
    </location>
</feature>
<feature type="region of interest" description="Interaction with host Mxra8 receptor" evidence="15">
    <location>
        <begin position="540"/>
        <end position="546"/>
    </location>
</feature>
<feature type="region of interest" description="Interaction with the capsid protein" evidence="3">
    <location>
        <begin position="714"/>
        <end position="718"/>
    </location>
</feature>
<feature type="region of interest" description="Transient transmembrane before p62-6K protein processing" evidence="12">
    <location>
        <begin position="719"/>
        <end position="739"/>
    </location>
</feature>
<feature type="region of interest" description="E1 fusion peptide loop" evidence="11">
    <location>
        <begin position="890"/>
        <end position="907"/>
    </location>
</feature>
<feature type="short sequence motif" description="Nuclear localization signal" evidence="4">
    <location>
        <begin position="59"/>
        <end position="96"/>
    </location>
</feature>
<feature type="short sequence motif" description="Nuclear export signal" evidence="4">
    <location>
        <begin position="141"/>
        <end position="151"/>
    </location>
</feature>
<feature type="compositionally biased region" description="Low complexity" evidence="14">
    <location>
        <begin position="26"/>
        <end position="42"/>
    </location>
</feature>
<feature type="compositionally biased region" description="Basic residues" evidence="14">
    <location>
        <begin position="61"/>
        <end position="73"/>
    </location>
</feature>
<feature type="compositionally biased region" description="Basic and acidic residues" evidence="14">
    <location>
        <begin position="74"/>
        <end position="86"/>
    </location>
</feature>
<feature type="compositionally biased region" description="Basic residues" evidence="14">
    <location>
        <begin position="87"/>
        <end position="98"/>
    </location>
</feature>
<feature type="active site" description="Charge relay system" evidence="13">
    <location>
        <position position="136"/>
    </location>
</feature>
<feature type="active site" description="Charge relay system" evidence="13">
    <location>
        <position position="158"/>
    </location>
</feature>
<feature type="active site" description="Charge relay system" evidence="13">
    <location>
        <position position="210"/>
    </location>
</feature>
<feature type="site" description="Involved in dimerization of the capsid protein" evidence="10">
    <location>
        <position position="184"/>
    </location>
</feature>
<feature type="site" description="Involved in dimerization of the capsid protein" evidence="10">
    <location>
        <position position="217"/>
    </location>
</feature>
<feature type="site" description="Cleavage; by autolysis" evidence="2">
    <location>
        <begin position="258"/>
        <end position="259"/>
    </location>
</feature>
<feature type="site" description="Cleavage; by host furin" evidence="2">
    <location>
        <begin position="324"/>
        <end position="325"/>
    </location>
</feature>
<feature type="site" description="Cleavage; by host signal peptidase" evidence="2">
    <location>
        <begin position="746"/>
        <end position="747"/>
    </location>
</feature>
<feature type="site" description="Cleavage; by host signal peptidase" evidence="2">
    <location>
        <begin position="806"/>
        <end position="807"/>
    </location>
</feature>
<feature type="lipid moiety-binding region" description="S-palmitoyl cysteine; by host" evidence="3">
    <location>
        <position position="719"/>
    </location>
</feature>
<feature type="lipid moiety-binding region" description="S-palmitoyl cysteine; by host" evidence="9">
    <location>
        <position position="739"/>
    </location>
</feature>
<feature type="lipid moiety-binding region" description="S-palmitoyl cysteine; by host" evidence="9">
    <location>
        <position position="740"/>
    </location>
</feature>
<feature type="lipid moiety-binding region" description="S-palmitoyl cysteine; by host" evidence="9">
    <location>
        <position position="1237"/>
    </location>
</feature>
<feature type="glycosylation site" description="N-linked (GlcNAc...) asparagine; by host" evidence="12">
    <location>
        <position position="271"/>
    </location>
</feature>
<feature type="glycosylation site" description="N-linked (GlcNAc...) asparagine; by host" evidence="9">
    <location>
        <position position="586"/>
    </location>
</feature>
<feature type="glycosylation site" description="N-linked (GlcNAc...) asparagine; by host" evidence="12">
    <location>
        <position position="760"/>
    </location>
</feature>
<feature type="glycosylation site" description="N-linked (GlcNAc...) asparagine; by host" evidence="9">
    <location>
        <position position="947"/>
    </location>
</feature>
<feature type="glycosylation site" description="N-linked (GlcNAc...) asparagine; by host" evidence="9">
    <location>
        <position position="1076"/>
    </location>
</feature>
<feature type="disulfide bond" evidence="2">
    <location>
        <begin position="110"/>
        <end position="125"/>
    </location>
</feature>
<feature type="disulfide bond" evidence="8">
    <location>
        <begin position="267"/>
        <end position="276"/>
    </location>
</feature>
<feature type="disulfide bond" evidence="8">
    <location>
        <begin position="281"/>
        <end position="285"/>
    </location>
</feature>
<feature type="disulfide bond" evidence="8">
    <location>
        <begin position="284"/>
        <end position="316"/>
    </location>
</feature>
<feature type="disulfide bond" evidence="7">
    <location>
        <begin position="343"/>
        <end position="449"/>
    </location>
</feature>
<feature type="disulfide bond" evidence="7">
    <location>
        <begin position="346"/>
        <end position="352"/>
    </location>
</feature>
<feature type="disulfide bond" evidence="7">
    <location>
        <begin position="415"/>
        <end position="429"/>
    </location>
</feature>
<feature type="disulfide bond" evidence="8">
    <location>
        <begin position="477"/>
        <end position="589"/>
    </location>
</feature>
<feature type="disulfide bond" evidence="8">
    <location>
        <begin position="527"/>
        <end position="544"/>
    </location>
</feature>
<feature type="disulfide bond" evidence="8">
    <location>
        <begin position="719"/>
        <end position="740"/>
    </location>
</feature>
<feature type="disulfide bond" evidence="9">
    <location>
        <begin position="855"/>
        <end position="920"/>
    </location>
</feature>
<feature type="disulfide bond" evidence="9">
    <location>
        <begin position="868"/>
        <end position="900"/>
    </location>
</feature>
<feature type="disulfide bond" evidence="9">
    <location>
        <begin position="869"/>
        <end position="902"/>
    </location>
</feature>
<feature type="disulfide bond" evidence="2">
    <location>
        <begin position="874"/>
        <end position="884"/>
    </location>
</feature>
<feature type="disulfide bond" evidence="9">
    <location>
        <begin position="1065"/>
        <end position="1077"/>
    </location>
</feature>
<feature type="disulfide bond" evidence="9">
    <location>
        <begin position="1107"/>
        <end position="1180"/>
    </location>
</feature>
<feature type="disulfide bond" evidence="9">
    <location>
        <begin position="1112"/>
        <end position="1184"/>
    </location>
</feature>
<feature type="disulfide bond" evidence="9">
    <location>
        <begin position="1134"/>
        <end position="1174"/>
    </location>
</feature>
<feature type="mutagenesis site" description="Increased viral replication in insect cells and enhanced transmission after escaping the midgut of the insect vector. No effect on the binding to the host receptor MXRA8." evidence="16">
    <original>T</original>
    <variation>N</variation>
    <location>
        <position position="503"/>
    </location>
</feature>
<dbReference type="EC" id="3.4.21.90" evidence="2"/>
<dbReference type="EMBL" id="AF237947">
    <property type="protein sequence ID" value="AAL79764.1"/>
    <property type="molecule type" value="Genomic_RNA"/>
</dbReference>
<dbReference type="EMBL" id="AF339482">
    <property type="protein sequence ID" value="AAO33335.1"/>
    <property type="molecule type" value="Genomic_RNA"/>
</dbReference>
<dbReference type="RefSeq" id="NP_579970.1">
    <property type="nucleotide sequence ID" value="NC_003417.1"/>
</dbReference>
<dbReference type="PDB" id="6W1C">
    <property type="method" value="EM"/>
    <property type="resolution" value="5.30 A"/>
    <property type="chains" value="A/B/C/D=807-1186, E/F/G/H=325-664"/>
</dbReference>
<dbReference type="PDB" id="6W2U">
    <property type="method" value="EM"/>
    <property type="resolution" value="4.80 A"/>
    <property type="chains" value="A/B/C/D=807-1186, E/F/G/H=325-664"/>
</dbReference>
<dbReference type="PDB" id="7LIH">
    <property type="method" value="EM"/>
    <property type="resolution" value="4.40 A"/>
    <property type="chains" value="A/B/C/F=99-258"/>
</dbReference>
<dbReference type="PDBsum" id="6W1C"/>
<dbReference type="PDBsum" id="6W2U"/>
<dbReference type="PDBsum" id="7LIH"/>
<dbReference type="EMDB" id="EMD-21509"/>
<dbReference type="EMDB" id="EMD-21532"/>
<dbReference type="EMDB" id="EMD-23378"/>
<dbReference type="SMR" id="Q8QZ72"/>
<dbReference type="MEROPS" id="S03.001"/>
<dbReference type="GeneID" id="935141"/>
<dbReference type="KEGG" id="vg:935141"/>
<dbReference type="Proteomes" id="UP000007774">
    <property type="component" value="Segment"/>
</dbReference>
<dbReference type="GO" id="GO:0030430">
    <property type="term" value="C:host cell cytoplasm"/>
    <property type="evidence" value="ECO:0007669"/>
    <property type="project" value="UniProtKB-SubCell"/>
</dbReference>
<dbReference type="GO" id="GO:0042025">
    <property type="term" value="C:host cell nucleus"/>
    <property type="evidence" value="ECO:0007669"/>
    <property type="project" value="UniProtKB-SubCell"/>
</dbReference>
<dbReference type="GO" id="GO:0020002">
    <property type="term" value="C:host cell plasma membrane"/>
    <property type="evidence" value="ECO:0007669"/>
    <property type="project" value="UniProtKB-SubCell"/>
</dbReference>
<dbReference type="GO" id="GO:0016020">
    <property type="term" value="C:membrane"/>
    <property type="evidence" value="ECO:0007669"/>
    <property type="project" value="UniProtKB-KW"/>
</dbReference>
<dbReference type="GO" id="GO:0039619">
    <property type="term" value="C:T=4 icosahedral viral capsid"/>
    <property type="evidence" value="ECO:0007669"/>
    <property type="project" value="UniProtKB-KW"/>
</dbReference>
<dbReference type="GO" id="GO:0055036">
    <property type="term" value="C:virion membrane"/>
    <property type="evidence" value="ECO:0007669"/>
    <property type="project" value="UniProtKB-SubCell"/>
</dbReference>
<dbReference type="GO" id="GO:0003723">
    <property type="term" value="F:RNA binding"/>
    <property type="evidence" value="ECO:0007669"/>
    <property type="project" value="UniProtKB-KW"/>
</dbReference>
<dbReference type="GO" id="GO:0004252">
    <property type="term" value="F:serine-type endopeptidase activity"/>
    <property type="evidence" value="ECO:0007669"/>
    <property type="project" value="InterPro"/>
</dbReference>
<dbReference type="GO" id="GO:0005198">
    <property type="term" value="F:structural molecule activity"/>
    <property type="evidence" value="ECO:0007669"/>
    <property type="project" value="InterPro"/>
</dbReference>
<dbReference type="GO" id="GO:0039654">
    <property type="term" value="P:fusion of virus membrane with host endosome membrane"/>
    <property type="evidence" value="ECO:0007669"/>
    <property type="project" value="UniProtKB-KW"/>
</dbReference>
<dbReference type="GO" id="GO:0006508">
    <property type="term" value="P:proteolysis"/>
    <property type="evidence" value="ECO:0007669"/>
    <property type="project" value="UniProtKB-KW"/>
</dbReference>
<dbReference type="GO" id="GO:0046718">
    <property type="term" value="P:symbiont entry into host cell"/>
    <property type="evidence" value="ECO:0007669"/>
    <property type="project" value="UniProtKB-KW"/>
</dbReference>
<dbReference type="GO" id="GO:0039722">
    <property type="term" value="P:symbiont-mediated suppression of host toll-like receptor signaling pathway"/>
    <property type="evidence" value="ECO:0000250"/>
    <property type="project" value="UniProtKB"/>
</dbReference>
<dbReference type="GO" id="GO:0019062">
    <property type="term" value="P:virion attachment to host cell"/>
    <property type="evidence" value="ECO:0007669"/>
    <property type="project" value="UniProtKB-KW"/>
</dbReference>
<dbReference type="FunFam" id="2.40.10.10:FF:000076">
    <property type="entry name" value="Structural polyprotein"/>
    <property type="match status" value="1"/>
</dbReference>
<dbReference type="FunFam" id="2.60.98.10:FF:000002">
    <property type="entry name" value="Structural polyprotein"/>
    <property type="match status" value="1"/>
</dbReference>
<dbReference type="Gene3D" id="1.10.287.2230">
    <property type="match status" value="1"/>
</dbReference>
<dbReference type="Gene3D" id="2.60.40.350">
    <property type="match status" value="1"/>
</dbReference>
<dbReference type="Gene3D" id="2.60.40.3200">
    <property type="entry name" value="Alphavirus E2 glycoprotein, A domain"/>
    <property type="match status" value="1"/>
</dbReference>
<dbReference type="Gene3D" id="2.60.40.4310">
    <property type="entry name" value="Alphavirus E2 glycoprotein, domain B"/>
    <property type="match status" value="1"/>
</dbReference>
<dbReference type="Gene3D" id="2.60.40.2400">
    <property type="entry name" value="Alphavirus E2 glycoprotein, domain C"/>
    <property type="match status" value="1"/>
</dbReference>
<dbReference type="Gene3D" id="2.60.98.10">
    <property type="entry name" value="Tick-borne Encephalitis virus Glycoprotein, domain 1"/>
    <property type="match status" value="3"/>
</dbReference>
<dbReference type="Gene3D" id="2.40.10.10">
    <property type="entry name" value="Trypsin-like serine proteases"/>
    <property type="match status" value="2"/>
</dbReference>
<dbReference type="InterPro" id="IPR002548">
    <property type="entry name" value="Alpha_E1_glycop"/>
</dbReference>
<dbReference type="InterPro" id="IPR000936">
    <property type="entry name" value="Alpha_E2_glycop"/>
</dbReference>
<dbReference type="InterPro" id="IPR002533">
    <property type="entry name" value="Alpha_E3_glycop"/>
</dbReference>
<dbReference type="InterPro" id="IPR042304">
    <property type="entry name" value="Alphavir_E2_A"/>
</dbReference>
<dbReference type="InterPro" id="IPR042305">
    <property type="entry name" value="Alphavir_E2_B"/>
</dbReference>
<dbReference type="InterPro" id="IPR042306">
    <property type="entry name" value="Alphavir_E2_C"/>
</dbReference>
<dbReference type="InterPro" id="IPR000336">
    <property type="entry name" value="Flavivir/Alphavir_Ig-like_sf"/>
</dbReference>
<dbReference type="InterPro" id="IPR036253">
    <property type="entry name" value="Glycoprot_cen/dimer_sf"/>
</dbReference>
<dbReference type="InterPro" id="IPR038055">
    <property type="entry name" value="Glycoprot_E_dimer_dom"/>
</dbReference>
<dbReference type="InterPro" id="IPR014756">
    <property type="entry name" value="Ig_E-set"/>
</dbReference>
<dbReference type="InterPro" id="IPR009003">
    <property type="entry name" value="Peptidase_S1_PA"/>
</dbReference>
<dbReference type="InterPro" id="IPR043504">
    <property type="entry name" value="Peptidase_S1_PA_chymotrypsin"/>
</dbReference>
<dbReference type="InterPro" id="IPR000930">
    <property type="entry name" value="Peptidase_S3"/>
</dbReference>
<dbReference type="Pfam" id="PF01589">
    <property type="entry name" value="Alpha_E1_glycop"/>
    <property type="match status" value="1"/>
</dbReference>
<dbReference type="Pfam" id="PF00943">
    <property type="entry name" value="Alpha_E2_glycop"/>
    <property type="match status" value="1"/>
</dbReference>
<dbReference type="Pfam" id="PF01563">
    <property type="entry name" value="Alpha_E3_glycop"/>
    <property type="match status" value="1"/>
</dbReference>
<dbReference type="Pfam" id="PF00944">
    <property type="entry name" value="Peptidase_S3"/>
    <property type="match status" value="1"/>
</dbReference>
<dbReference type="PRINTS" id="PR00798">
    <property type="entry name" value="TOGAVIRIN"/>
</dbReference>
<dbReference type="SUPFAM" id="SSF81296">
    <property type="entry name" value="E set domains"/>
    <property type="match status" value="1"/>
</dbReference>
<dbReference type="SUPFAM" id="SSF50494">
    <property type="entry name" value="Trypsin-like serine proteases"/>
    <property type="match status" value="1"/>
</dbReference>
<dbReference type="SUPFAM" id="SSF56983">
    <property type="entry name" value="Viral glycoprotein, central and dimerisation domains"/>
    <property type="match status" value="1"/>
</dbReference>
<dbReference type="PROSITE" id="PS51690">
    <property type="entry name" value="ALPHAVIRUS_CP"/>
    <property type="match status" value="1"/>
</dbReference>
<keyword id="KW-0002">3D-structure</keyword>
<keyword id="KW-0167">Capsid protein</keyword>
<keyword id="KW-0165">Cleavage on pair of basic residues</keyword>
<keyword id="KW-1015">Disulfide bond</keyword>
<keyword id="KW-1170">Fusion of virus membrane with host endosomal membrane</keyword>
<keyword id="KW-1168">Fusion of virus membrane with host membrane</keyword>
<keyword id="KW-0325">Glycoprotein</keyword>
<keyword id="KW-1032">Host cell membrane</keyword>
<keyword id="KW-1035">Host cytoplasm</keyword>
<keyword id="KW-1038">Host endoplasmic reticulum</keyword>
<keyword id="KW-1040">Host Golgi apparatus</keyword>
<keyword id="KW-1043">Host membrane</keyword>
<keyword id="KW-1048">Host nucleus</keyword>
<keyword id="KW-0945">Host-virus interaction</keyword>
<keyword id="KW-0378">Hydrolase</keyword>
<keyword id="KW-0407">Ion channel</keyword>
<keyword id="KW-0406">Ion transport</keyword>
<keyword id="KW-0449">Lipoprotein</keyword>
<keyword id="KW-0472">Membrane</keyword>
<keyword id="KW-0564">Palmitate</keyword>
<keyword id="KW-0645">Protease</keyword>
<keyword id="KW-0694">RNA-binding</keyword>
<keyword id="KW-0720">Serine protease</keyword>
<keyword id="KW-1144">T=4 icosahedral capsid protein</keyword>
<keyword id="KW-0812">Transmembrane</keyword>
<keyword id="KW-1133">Transmembrane helix</keyword>
<keyword id="KW-0813">Transport</keyword>
<keyword id="KW-1161">Viral attachment to host cell</keyword>
<keyword id="KW-1234">Viral attachment to host entry receptor</keyword>
<keyword id="KW-1182">Viral ion channel</keyword>
<keyword id="KW-1162">Viral penetration into host cytoplasm</keyword>
<keyword id="KW-0946">Virion</keyword>
<keyword id="KW-1160">Virus entry into host cell</keyword>
<organismHost>
    <name type="scientific">Aedes aegypti</name>
    <name type="common">Yellowfever mosquito</name>
    <name type="synonym">Culex aegypti</name>
    <dbReference type="NCBI Taxonomy" id="7159"/>
</organismHost>
<organismHost>
    <name type="scientific">Haemagogus</name>
    <dbReference type="NCBI Taxonomy" id="7180"/>
</organismHost>
<organismHost>
    <name type="scientific">Homo sapiens</name>
    <name type="common">Human</name>
    <dbReference type="NCBI Taxonomy" id="9606"/>
</organismHost>